<gene>
    <name evidence="1" type="primary">argG</name>
    <name type="ordered locus">Bcen_4651</name>
</gene>
<organism>
    <name type="scientific">Burkholderia orbicola (strain AU 1054)</name>
    <dbReference type="NCBI Taxonomy" id="331271"/>
    <lineage>
        <taxon>Bacteria</taxon>
        <taxon>Pseudomonadati</taxon>
        <taxon>Pseudomonadota</taxon>
        <taxon>Betaproteobacteria</taxon>
        <taxon>Burkholderiales</taxon>
        <taxon>Burkholderiaceae</taxon>
        <taxon>Burkholderia</taxon>
        <taxon>Burkholderia cepacia complex</taxon>
        <taxon>Burkholderia orbicola</taxon>
    </lineage>
</organism>
<sequence length="445" mass="49237">MSTILESLPTGQKVGIAFSGGLDTSAALHWMKLKGAVPYAYTANLGQPDEDDYDAIPKRAIEYGAAGARLIDCRAQLVAEGIAALQSGAFHITTAGVTYFNTTPIGRAVTGTMLVAAMKEDGVNIWGDGSTYKGNDIERFYRYGLLVNPDLKIYKPWLDQTFIDELGGRAEMSEFMNQAGFAYKMSAEKAYSTDSNLLGATHEAKDLESLESGIKIVNPIMGVAFWRDDVKIAAEEVTVRFEAGQPVALNGVEFKDQVELLLEANRIGGRHGLGMSDQIENRIIEAKSRGIYEAPGLALLYIAYERLVTGIHNEDTIEQYRENGRRLGRLLYQGRWFDPQAIMLRETAQRWVARAITGEVKIELRRGNDYSILSTKSPNLTYQPERLSMEKVASTFSPRDRIGQLTMRNLDITDTRDKLRVYSQVGLLTPGETSALPQIKGDGDK</sequence>
<protein>
    <recommendedName>
        <fullName evidence="1">Argininosuccinate synthase</fullName>
        <ecNumber evidence="1">6.3.4.5</ecNumber>
    </recommendedName>
    <alternativeName>
        <fullName evidence="1">Citrulline--aspartate ligase</fullName>
    </alternativeName>
</protein>
<reference key="1">
    <citation type="submission" date="2006-05" db="EMBL/GenBank/DDBJ databases">
        <title>Complete sequence of chromosome 2 of Burkholderia cenocepacia AU 1054.</title>
        <authorList>
            <consortium name="US DOE Joint Genome Institute"/>
            <person name="Copeland A."/>
            <person name="Lucas S."/>
            <person name="Lapidus A."/>
            <person name="Barry K."/>
            <person name="Detter J.C."/>
            <person name="Glavina del Rio T."/>
            <person name="Hammon N."/>
            <person name="Israni S."/>
            <person name="Dalin E."/>
            <person name="Tice H."/>
            <person name="Pitluck S."/>
            <person name="Chain P."/>
            <person name="Malfatti S."/>
            <person name="Shin M."/>
            <person name="Vergez L."/>
            <person name="Schmutz J."/>
            <person name="Larimer F."/>
            <person name="Land M."/>
            <person name="Hauser L."/>
            <person name="Kyrpides N."/>
            <person name="Lykidis A."/>
            <person name="LiPuma J.J."/>
            <person name="Konstantinidis K."/>
            <person name="Tiedje J.M."/>
            <person name="Richardson P."/>
        </authorList>
    </citation>
    <scope>NUCLEOTIDE SEQUENCE [LARGE SCALE GENOMIC DNA]</scope>
    <source>
        <strain>AU 1054</strain>
    </source>
</reference>
<accession>Q1BLH4</accession>
<keyword id="KW-0028">Amino-acid biosynthesis</keyword>
<keyword id="KW-0055">Arginine biosynthesis</keyword>
<keyword id="KW-0067">ATP-binding</keyword>
<keyword id="KW-0963">Cytoplasm</keyword>
<keyword id="KW-0436">Ligase</keyword>
<keyword id="KW-0547">Nucleotide-binding</keyword>
<evidence type="ECO:0000255" key="1">
    <source>
        <dbReference type="HAMAP-Rule" id="MF_00581"/>
    </source>
</evidence>
<name>ASSY_BURO1</name>
<proteinExistence type="inferred from homology"/>
<dbReference type="EC" id="6.3.4.5" evidence="1"/>
<dbReference type="EMBL" id="CP000379">
    <property type="protein sequence ID" value="ABF79531.1"/>
    <property type="molecule type" value="Genomic_DNA"/>
</dbReference>
<dbReference type="SMR" id="Q1BLH4"/>
<dbReference type="HOGENOM" id="CLU_032784_4_1_4"/>
<dbReference type="UniPathway" id="UPA00068">
    <property type="reaction ID" value="UER00113"/>
</dbReference>
<dbReference type="GO" id="GO:0005737">
    <property type="term" value="C:cytoplasm"/>
    <property type="evidence" value="ECO:0007669"/>
    <property type="project" value="UniProtKB-SubCell"/>
</dbReference>
<dbReference type="GO" id="GO:0004055">
    <property type="term" value="F:argininosuccinate synthase activity"/>
    <property type="evidence" value="ECO:0007669"/>
    <property type="project" value="UniProtKB-UniRule"/>
</dbReference>
<dbReference type="GO" id="GO:0005524">
    <property type="term" value="F:ATP binding"/>
    <property type="evidence" value="ECO:0007669"/>
    <property type="project" value="UniProtKB-UniRule"/>
</dbReference>
<dbReference type="GO" id="GO:0042803">
    <property type="term" value="F:protein homodimerization activity"/>
    <property type="evidence" value="ECO:0007669"/>
    <property type="project" value="InterPro"/>
</dbReference>
<dbReference type="GO" id="GO:0000053">
    <property type="term" value="P:argininosuccinate metabolic process"/>
    <property type="evidence" value="ECO:0007669"/>
    <property type="project" value="TreeGrafter"/>
</dbReference>
<dbReference type="GO" id="GO:0006526">
    <property type="term" value="P:L-arginine biosynthetic process"/>
    <property type="evidence" value="ECO:0007669"/>
    <property type="project" value="UniProtKB-UniRule"/>
</dbReference>
<dbReference type="GO" id="GO:0000050">
    <property type="term" value="P:urea cycle"/>
    <property type="evidence" value="ECO:0007669"/>
    <property type="project" value="TreeGrafter"/>
</dbReference>
<dbReference type="CDD" id="cd01999">
    <property type="entry name" value="ASS"/>
    <property type="match status" value="1"/>
</dbReference>
<dbReference type="FunFam" id="1.10.287.400:FF:000001">
    <property type="entry name" value="Argininosuccinate synthase"/>
    <property type="match status" value="1"/>
</dbReference>
<dbReference type="Gene3D" id="1.10.287.400">
    <property type="match status" value="1"/>
</dbReference>
<dbReference type="Gene3D" id="3.90.1260.10">
    <property type="entry name" value="Argininosuccinate synthetase, chain A, domain 2"/>
    <property type="match status" value="1"/>
</dbReference>
<dbReference type="Gene3D" id="3.40.50.620">
    <property type="entry name" value="HUPs"/>
    <property type="match status" value="1"/>
</dbReference>
<dbReference type="HAMAP" id="MF_00581">
    <property type="entry name" value="Arg_succ_synth_type2"/>
    <property type="match status" value="1"/>
</dbReference>
<dbReference type="InterPro" id="IPR023437">
    <property type="entry name" value="Arg_succ_synth_type2_subfam"/>
</dbReference>
<dbReference type="InterPro" id="IPR048268">
    <property type="entry name" value="Arginosuc_syn_C"/>
</dbReference>
<dbReference type="InterPro" id="IPR048267">
    <property type="entry name" value="Arginosuc_syn_N"/>
</dbReference>
<dbReference type="InterPro" id="IPR001518">
    <property type="entry name" value="Arginosuc_synth"/>
</dbReference>
<dbReference type="InterPro" id="IPR018223">
    <property type="entry name" value="Arginosuc_synth_CS"/>
</dbReference>
<dbReference type="InterPro" id="IPR023434">
    <property type="entry name" value="Arginosuc_synth_type_1_subfam"/>
</dbReference>
<dbReference type="InterPro" id="IPR024074">
    <property type="entry name" value="AS_cat/multimer_dom_body"/>
</dbReference>
<dbReference type="InterPro" id="IPR024073">
    <property type="entry name" value="AS_multimer_C_tail"/>
</dbReference>
<dbReference type="InterPro" id="IPR014729">
    <property type="entry name" value="Rossmann-like_a/b/a_fold"/>
</dbReference>
<dbReference type="NCBIfam" id="TIGR00032">
    <property type="entry name" value="argG"/>
    <property type="match status" value="1"/>
</dbReference>
<dbReference type="NCBIfam" id="NF003779">
    <property type="entry name" value="PRK05370.1"/>
    <property type="match status" value="1"/>
</dbReference>
<dbReference type="PANTHER" id="PTHR11587">
    <property type="entry name" value="ARGININOSUCCINATE SYNTHASE"/>
    <property type="match status" value="1"/>
</dbReference>
<dbReference type="PANTHER" id="PTHR11587:SF2">
    <property type="entry name" value="ARGININOSUCCINATE SYNTHASE"/>
    <property type="match status" value="1"/>
</dbReference>
<dbReference type="Pfam" id="PF20979">
    <property type="entry name" value="Arginosuc_syn_C"/>
    <property type="match status" value="1"/>
</dbReference>
<dbReference type="Pfam" id="PF00764">
    <property type="entry name" value="Arginosuc_synth"/>
    <property type="match status" value="1"/>
</dbReference>
<dbReference type="SUPFAM" id="SSF52402">
    <property type="entry name" value="Adenine nucleotide alpha hydrolases-like"/>
    <property type="match status" value="1"/>
</dbReference>
<dbReference type="SUPFAM" id="SSF69864">
    <property type="entry name" value="Argininosuccinate synthetase, C-terminal domain"/>
    <property type="match status" value="1"/>
</dbReference>
<dbReference type="PROSITE" id="PS00564">
    <property type="entry name" value="ARGININOSUCCIN_SYN_1"/>
    <property type="match status" value="1"/>
</dbReference>
<dbReference type="PROSITE" id="PS00565">
    <property type="entry name" value="ARGININOSUCCIN_SYN_2"/>
    <property type="match status" value="1"/>
</dbReference>
<comment type="catalytic activity">
    <reaction evidence="1">
        <text>L-citrulline + L-aspartate + ATP = 2-(N(omega)-L-arginino)succinate + AMP + diphosphate + H(+)</text>
        <dbReference type="Rhea" id="RHEA:10932"/>
        <dbReference type="ChEBI" id="CHEBI:15378"/>
        <dbReference type="ChEBI" id="CHEBI:29991"/>
        <dbReference type="ChEBI" id="CHEBI:30616"/>
        <dbReference type="ChEBI" id="CHEBI:33019"/>
        <dbReference type="ChEBI" id="CHEBI:57472"/>
        <dbReference type="ChEBI" id="CHEBI:57743"/>
        <dbReference type="ChEBI" id="CHEBI:456215"/>
        <dbReference type="EC" id="6.3.4.5"/>
    </reaction>
</comment>
<comment type="pathway">
    <text evidence="1">Amino-acid biosynthesis; L-arginine biosynthesis; L-arginine from L-ornithine and carbamoyl phosphate: step 2/3.</text>
</comment>
<comment type="subunit">
    <text evidence="1">Homotetramer.</text>
</comment>
<comment type="subcellular location">
    <subcellularLocation>
        <location evidence="1">Cytoplasm</location>
    </subcellularLocation>
</comment>
<comment type="similarity">
    <text evidence="1">Belongs to the argininosuccinate synthase family. Type 2 subfamily.</text>
</comment>
<feature type="chain" id="PRO_1000129737" description="Argininosuccinate synthase">
    <location>
        <begin position="1"/>
        <end position="445"/>
    </location>
</feature>
<feature type="binding site" evidence="1">
    <location>
        <begin position="17"/>
        <end position="25"/>
    </location>
    <ligand>
        <name>ATP</name>
        <dbReference type="ChEBI" id="CHEBI:30616"/>
    </ligand>
</feature>
<feature type="binding site" evidence="1">
    <location>
        <position position="43"/>
    </location>
    <ligand>
        <name>ATP</name>
        <dbReference type="ChEBI" id="CHEBI:30616"/>
    </ligand>
</feature>
<feature type="binding site" evidence="1">
    <location>
        <position position="99"/>
    </location>
    <ligand>
        <name>L-citrulline</name>
        <dbReference type="ChEBI" id="CHEBI:57743"/>
    </ligand>
</feature>
<feature type="binding site" evidence="1">
    <location>
        <position position="129"/>
    </location>
    <ligand>
        <name>ATP</name>
        <dbReference type="ChEBI" id="CHEBI:30616"/>
    </ligand>
</feature>
<feature type="binding site" evidence="1">
    <location>
        <position position="131"/>
    </location>
    <ligand>
        <name>ATP</name>
        <dbReference type="ChEBI" id="CHEBI:30616"/>
    </ligand>
</feature>
<feature type="binding site" evidence="1">
    <location>
        <position position="131"/>
    </location>
    <ligand>
        <name>L-aspartate</name>
        <dbReference type="ChEBI" id="CHEBI:29991"/>
    </ligand>
</feature>
<feature type="binding site" evidence="1">
    <location>
        <position position="135"/>
    </location>
    <ligand>
        <name>L-aspartate</name>
        <dbReference type="ChEBI" id="CHEBI:29991"/>
    </ligand>
</feature>
<feature type="binding site" evidence="1">
    <location>
        <position position="135"/>
    </location>
    <ligand>
        <name>L-citrulline</name>
        <dbReference type="ChEBI" id="CHEBI:57743"/>
    </ligand>
</feature>
<feature type="binding site" evidence="1">
    <location>
        <position position="136"/>
    </location>
    <ligand>
        <name>ATP</name>
        <dbReference type="ChEBI" id="CHEBI:30616"/>
    </ligand>
</feature>
<feature type="binding site" evidence="1">
    <location>
        <position position="136"/>
    </location>
    <ligand>
        <name>L-aspartate</name>
        <dbReference type="ChEBI" id="CHEBI:29991"/>
    </ligand>
</feature>
<feature type="binding site" evidence="1">
    <location>
        <position position="139"/>
    </location>
    <ligand>
        <name>L-citrulline</name>
        <dbReference type="ChEBI" id="CHEBI:57743"/>
    </ligand>
</feature>
<feature type="binding site" evidence="1">
    <location>
        <position position="192"/>
    </location>
    <ligand>
        <name>L-citrulline</name>
        <dbReference type="ChEBI" id="CHEBI:57743"/>
    </ligand>
</feature>
<feature type="binding site" evidence="1">
    <location>
        <position position="194"/>
    </location>
    <ligand>
        <name>ATP</name>
        <dbReference type="ChEBI" id="CHEBI:30616"/>
    </ligand>
</feature>
<feature type="binding site" evidence="1">
    <location>
        <position position="201"/>
    </location>
    <ligand>
        <name>L-citrulline</name>
        <dbReference type="ChEBI" id="CHEBI:57743"/>
    </ligand>
</feature>
<feature type="binding site" evidence="1">
    <location>
        <position position="203"/>
    </location>
    <ligand>
        <name>L-citrulline</name>
        <dbReference type="ChEBI" id="CHEBI:57743"/>
    </ligand>
</feature>
<feature type="binding site" evidence="1">
    <location>
        <position position="280"/>
    </location>
    <ligand>
        <name>L-citrulline</name>
        <dbReference type="ChEBI" id="CHEBI:57743"/>
    </ligand>
</feature>